<dbReference type="EC" id="1.13.11.54" evidence="1"/>
<dbReference type="EC" id="1.13.11.53" evidence="1"/>
<dbReference type="EMBL" id="AE016853">
    <property type="protein sequence ID" value="AAO55564.1"/>
    <property type="molecule type" value="Genomic_DNA"/>
</dbReference>
<dbReference type="RefSeq" id="NP_791869.1">
    <property type="nucleotide sequence ID" value="NC_004578.1"/>
</dbReference>
<dbReference type="RefSeq" id="WP_011103818.1">
    <property type="nucleotide sequence ID" value="NC_004578.1"/>
</dbReference>
<dbReference type="SMR" id="Q884P2"/>
<dbReference type="STRING" id="223283.PSPTO_2046"/>
<dbReference type="GeneID" id="1183691"/>
<dbReference type="KEGG" id="pst:PSPTO_2046"/>
<dbReference type="PATRIC" id="fig|223283.9.peg.2077"/>
<dbReference type="eggNOG" id="COG1791">
    <property type="taxonomic scope" value="Bacteria"/>
</dbReference>
<dbReference type="HOGENOM" id="CLU_125400_0_0_6"/>
<dbReference type="OrthoDB" id="9795636at2"/>
<dbReference type="PhylomeDB" id="Q884P2"/>
<dbReference type="UniPathway" id="UPA00904">
    <property type="reaction ID" value="UER00878"/>
</dbReference>
<dbReference type="Proteomes" id="UP000002515">
    <property type="component" value="Chromosome"/>
</dbReference>
<dbReference type="GO" id="GO:0010308">
    <property type="term" value="F:acireductone dioxygenase (Ni2+-requiring) activity"/>
    <property type="evidence" value="ECO:0007669"/>
    <property type="project" value="UniProtKB-UniRule"/>
</dbReference>
<dbReference type="GO" id="GO:0010309">
    <property type="term" value="F:acireductone dioxygenase [iron(II)-requiring] activity"/>
    <property type="evidence" value="ECO:0007669"/>
    <property type="project" value="UniProtKB-UniRule"/>
</dbReference>
<dbReference type="GO" id="GO:0005506">
    <property type="term" value="F:iron ion binding"/>
    <property type="evidence" value="ECO:0007669"/>
    <property type="project" value="UniProtKB-UniRule"/>
</dbReference>
<dbReference type="GO" id="GO:0016151">
    <property type="term" value="F:nickel cation binding"/>
    <property type="evidence" value="ECO:0007669"/>
    <property type="project" value="UniProtKB-UniRule"/>
</dbReference>
<dbReference type="GO" id="GO:0019509">
    <property type="term" value="P:L-methionine salvage from methylthioadenosine"/>
    <property type="evidence" value="ECO:0007669"/>
    <property type="project" value="UniProtKB-UniRule"/>
</dbReference>
<dbReference type="GO" id="GO:0019284">
    <property type="term" value="P:L-methionine salvage from S-adenosylmethionine"/>
    <property type="evidence" value="ECO:0007669"/>
    <property type="project" value="InterPro"/>
</dbReference>
<dbReference type="CDD" id="cd02232">
    <property type="entry name" value="cupin_ARD"/>
    <property type="match status" value="1"/>
</dbReference>
<dbReference type="Gene3D" id="2.60.120.10">
    <property type="entry name" value="Jelly Rolls"/>
    <property type="match status" value="1"/>
</dbReference>
<dbReference type="HAMAP" id="MF_01682">
    <property type="entry name" value="Salvage_MtnD"/>
    <property type="match status" value="1"/>
</dbReference>
<dbReference type="InterPro" id="IPR004313">
    <property type="entry name" value="ARD"/>
</dbReference>
<dbReference type="InterPro" id="IPR023956">
    <property type="entry name" value="ARD_bac"/>
</dbReference>
<dbReference type="InterPro" id="IPR014710">
    <property type="entry name" value="RmlC-like_jellyroll"/>
</dbReference>
<dbReference type="InterPro" id="IPR011051">
    <property type="entry name" value="RmlC_Cupin_sf"/>
</dbReference>
<dbReference type="PANTHER" id="PTHR23418">
    <property type="entry name" value="ACIREDUCTONE DIOXYGENASE"/>
    <property type="match status" value="1"/>
</dbReference>
<dbReference type="PANTHER" id="PTHR23418:SF0">
    <property type="entry name" value="ACIREDUCTONE DIOXYGENASE"/>
    <property type="match status" value="1"/>
</dbReference>
<dbReference type="Pfam" id="PF03079">
    <property type="entry name" value="ARD"/>
    <property type="match status" value="1"/>
</dbReference>
<dbReference type="SUPFAM" id="SSF51182">
    <property type="entry name" value="RmlC-like cupins"/>
    <property type="match status" value="1"/>
</dbReference>
<gene>
    <name evidence="1" type="primary">mtnD</name>
    <name type="ordered locus">PSPTO_2046</name>
</gene>
<protein>
    <recommendedName>
        <fullName evidence="1">Acireductone dioxygenase</fullName>
    </recommendedName>
    <alternativeName>
        <fullName evidence="1">1,2-dihydroxy-3-keto-5-methylthiopentene dioxygenase</fullName>
        <shortName evidence="1">DHK-MTPene dioxygenase</shortName>
    </alternativeName>
    <alternativeName>
        <fullName evidence="1">Acireductone dioxygenase (Fe(2+)-requiring)</fullName>
        <shortName evidence="1">ARD'</shortName>
        <shortName evidence="1">Fe-ARD</shortName>
        <ecNumber evidence="1">1.13.11.54</ecNumber>
    </alternativeName>
    <alternativeName>
        <fullName evidence="1">Acireductone dioxygenase (Ni(2+)-requiring)</fullName>
        <shortName evidence="1">ARD</shortName>
        <shortName evidence="1">Ni-ARD</shortName>
        <ecNumber evidence="1">1.13.11.53</ecNumber>
    </alternativeName>
</protein>
<reference key="1">
    <citation type="journal article" date="2003" name="Proc. Natl. Acad. Sci. U.S.A.">
        <title>The complete genome sequence of the Arabidopsis and tomato pathogen Pseudomonas syringae pv. tomato DC3000.</title>
        <authorList>
            <person name="Buell C.R."/>
            <person name="Joardar V."/>
            <person name="Lindeberg M."/>
            <person name="Selengut J."/>
            <person name="Paulsen I.T."/>
            <person name="Gwinn M.L."/>
            <person name="Dodson R.J."/>
            <person name="DeBoy R.T."/>
            <person name="Durkin A.S."/>
            <person name="Kolonay J.F."/>
            <person name="Madupu R."/>
            <person name="Daugherty S.C."/>
            <person name="Brinkac L.M."/>
            <person name="Beanan M.J."/>
            <person name="Haft D.H."/>
            <person name="Nelson W.C."/>
            <person name="Davidsen T.M."/>
            <person name="Zafar N."/>
            <person name="Zhou L."/>
            <person name="Liu J."/>
            <person name="Yuan Q."/>
            <person name="Khouri H.M."/>
            <person name="Fedorova N.B."/>
            <person name="Tran B."/>
            <person name="Russell D."/>
            <person name="Berry K.J."/>
            <person name="Utterback T.R."/>
            <person name="Van Aken S.E."/>
            <person name="Feldblyum T.V."/>
            <person name="D'Ascenzo M."/>
            <person name="Deng W.-L."/>
            <person name="Ramos A.R."/>
            <person name="Alfano J.R."/>
            <person name="Cartinhour S."/>
            <person name="Chatterjee A.K."/>
            <person name="Delaney T.P."/>
            <person name="Lazarowitz S.G."/>
            <person name="Martin G.B."/>
            <person name="Schneider D.J."/>
            <person name="Tang X."/>
            <person name="Bender C.L."/>
            <person name="White O."/>
            <person name="Fraser C.M."/>
            <person name="Collmer A."/>
        </authorList>
    </citation>
    <scope>NUCLEOTIDE SEQUENCE [LARGE SCALE GENOMIC DNA]</scope>
    <source>
        <strain>ATCC BAA-871 / DC3000</strain>
    </source>
</reference>
<sequence length="181" mass="20461">MSSLSVYHVSSPDIPNKVLTHLEDIASTLAEHGVAFDRWEAATPITPGASQEEVINAYRTQIDTLMTRHGYVTVDVISLNSDHPQKAELRARFLEEHRHGEDEVRFFVAGRGLFTLHIDDYVYAVLCEKNDLISVPAGTRHWFDMGENPHFVAIRLFNNPDGWVANFTGEDIAGRFPRLED</sequence>
<name>MTND_PSESM</name>
<accession>Q884P2</accession>
<evidence type="ECO:0000255" key="1">
    <source>
        <dbReference type="HAMAP-Rule" id="MF_01682"/>
    </source>
</evidence>
<keyword id="KW-0028">Amino-acid biosynthesis</keyword>
<keyword id="KW-0223">Dioxygenase</keyword>
<keyword id="KW-0408">Iron</keyword>
<keyword id="KW-0479">Metal-binding</keyword>
<keyword id="KW-0486">Methionine biosynthesis</keyword>
<keyword id="KW-0533">Nickel</keyword>
<keyword id="KW-0560">Oxidoreductase</keyword>
<keyword id="KW-1185">Reference proteome</keyword>
<proteinExistence type="inferred from homology"/>
<feature type="chain" id="PRO_0000359225" description="Acireductone dioxygenase">
    <location>
        <begin position="1"/>
        <end position="181"/>
    </location>
</feature>
<feature type="binding site" evidence="1">
    <location>
        <position position="97"/>
    </location>
    <ligand>
        <name>Fe(2+)</name>
        <dbReference type="ChEBI" id="CHEBI:29033"/>
    </ligand>
</feature>
<feature type="binding site" evidence="1">
    <location>
        <position position="97"/>
    </location>
    <ligand>
        <name>Ni(2+)</name>
        <dbReference type="ChEBI" id="CHEBI:49786"/>
    </ligand>
</feature>
<feature type="binding site" evidence="1">
    <location>
        <position position="99"/>
    </location>
    <ligand>
        <name>Fe(2+)</name>
        <dbReference type="ChEBI" id="CHEBI:29033"/>
    </ligand>
</feature>
<feature type="binding site" evidence="1">
    <location>
        <position position="99"/>
    </location>
    <ligand>
        <name>Ni(2+)</name>
        <dbReference type="ChEBI" id="CHEBI:49786"/>
    </ligand>
</feature>
<feature type="binding site" evidence="1">
    <location>
        <position position="103"/>
    </location>
    <ligand>
        <name>Fe(2+)</name>
        <dbReference type="ChEBI" id="CHEBI:29033"/>
    </ligand>
</feature>
<feature type="binding site" evidence="1">
    <location>
        <position position="103"/>
    </location>
    <ligand>
        <name>Ni(2+)</name>
        <dbReference type="ChEBI" id="CHEBI:49786"/>
    </ligand>
</feature>
<feature type="binding site" evidence="1">
    <location>
        <position position="141"/>
    </location>
    <ligand>
        <name>Fe(2+)</name>
        <dbReference type="ChEBI" id="CHEBI:29033"/>
    </ligand>
</feature>
<feature type="binding site" evidence="1">
    <location>
        <position position="141"/>
    </location>
    <ligand>
        <name>Ni(2+)</name>
        <dbReference type="ChEBI" id="CHEBI:49786"/>
    </ligand>
</feature>
<feature type="site" description="May play a role in metal incorporation in vivo" evidence="1">
    <location>
        <position position="96"/>
    </location>
</feature>
<feature type="site" description="May play a role in transmitting local conformational changes" evidence="1">
    <location>
        <position position="102"/>
    </location>
</feature>
<feature type="site" description="Important to generate the dianion" evidence="1">
    <location>
        <position position="105"/>
    </location>
</feature>
<comment type="function">
    <text evidence="1">Catalyzes 2 different reactions between oxygen and the acireductone 1,2-dihydroxy-3-keto-5-methylthiopentene (DHK-MTPene) depending upon the metal bound in the active site. Fe-containing acireductone dioxygenase (Fe-ARD) produces formate and 2-keto-4-methylthiobutyrate (KMTB), the alpha-ketoacid precursor of methionine in the methionine recycle pathway. Ni-containing acireductone dioxygenase (Ni-ARD) produces methylthiopropionate, carbon monoxide and formate, and does not lie on the methionine recycle pathway.</text>
</comment>
<comment type="catalytic activity">
    <reaction evidence="1">
        <text>1,2-dihydroxy-5-(methylsulfanyl)pent-1-en-3-one + O2 = 3-(methylsulfanyl)propanoate + CO + formate + 2 H(+)</text>
        <dbReference type="Rhea" id="RHEA:14161"/>
        <dbReference type="ChEBI" id="CHEBI:15378"/>
        <dbReference type="ChEBI" id="CHEBI:15379"/>
        <dbReference type="ChEBI" id="CHEBI:15740"/>
        <dbReference type="ChEBI" id="CHEBI:17245"/>
        <dbReference type="ChEBI" id="CHEBI:49016"/>
        <dbReference type="ChEBI" id="CHEBI:49252"/>
        <dbReference type="EC" id="1.13.11.53"/>
    </reaction>
</comment>
<comment type="catalytic activity">
    <reaction evidence="1">
        <text>1,2-dihydroxy-5-(methylsulfanyl)pent-1-en-3-one + O2 = 4-methylsulfanyl-2-oxobutanoate + formate + 2 H(+)</text>
        <dbReference type="Rhea" id="RHEA:24504"/>
        <dbReference type="ChEBI" id="CHEBI:15378"/>
        <dbReference type="ChEBI" id="CHEBI:15379"/>
        <dbReference type="ChEBI" id="CHEBI:15740"/>
        <dbReference type="ChEBI" id="CHEBI:16723"/>
        <dbReference type="ChEBI" id="CHEBI:49252"/>
        <dbReference type="EC" id="1.13.11.54"/>
    </reaction>
</comment>
<comment type="cofactor">
    <cofactor evidence="1">
        <name>Fe(2+)</name>
        <dbReference type="ChEBI" id="CHEBI:29033"/>
    </cofactor>
    <text evidence="1">Binds 1 Fe(2+) cation per monomer.</text>
</comment>
<comment type="cofactor">
    <cofactor evidence="1">
        <name>Ni(2+)</name>
        <dbReference type="ChEBI" id="CHEBI:49786"/>
    </cofactor>
    <text evidence="1">Binds 1 nickel ion per monomer.</text>
</comment>
<comment type="pathway">
    <text evidence="1">Amino-acid biosynthesis; L-methionine biosynthesis via salvage pathway; L-methionine from S-methyl-5-thio-alpha-D-ribose 1-phosphate: step 5/6.</text>
</comment>
<comment type="subunit">
    <text evidence="1">Monomer.</text>
</comment>
<comment type="similarity">
    <text evidence="1">Belongs to the acireductone dioxygenase (ARD) family.</text>
</comment>
<organism>
    <name type="scientific">Pseudomonas syringae pv. tomato (strain ATCC BAA-871 / DC3000)</name>
    <dbReference type="NCBI Taxonomy" id="223283"/>
    <lineage>
        <taxon>Bacteria</taxon>
        <taxon>Pseudomonadati</taxon>
        <taxon>Pseudomonadota</taxon>
        <taxon>Gammaproteobacteria</taxon>
        <taxon>Pseudomonadales</taxon>
        <taxon>Pseudomonadaceae</taxon>
        <taxon>Pseudomonas</taxon>
    </lineage>
</organism>